<feature type="chain" id="PRO_0000049504" description="Uncharacterized protein YdgD">
    <location>
        <begin position="1"/>
        <end position="114"/>
    </location>
</feature>
<feature type="transmembrane region" description="Helical" evidence="1">
    <location>
        <begin position="38"/>
        <end position="60"/>
    </location>
</feature>
<feature type="transmembrane region" description="Helical" evidence="1">
    <location>
        <begin position="64"/>
        <end position="86"/>
    </location>
</feature>
<feature type="transmembrane region" description="Helical" evidence="1">
    <location>
        <begin position="91"/>
        <end position="113"/>
    </location>
</feature>
<evidence type="ECO:0000255" key="1"/>
<evidence type="ECO:0000305" key="2"/>
<name>YDGD_BACSU</name>
<organism>
    <name type="scientific">Bacillus subtilis (strain 168)</name>
    <dbReference type="NCBI Taxonomy" id="224308"/>
    <lineage>
        <taxon>Bacteria</taxon>
        <taxon>Bacillati</taxon>
        <taxon>Bacillota</taxon>
        <taxon>Bacilli</taxon>
        <taxon>Bacillales</taxon>
        <taxon>Bacillaceae</taxon>
        <taxon>Bacillus</taxon>
    </lineage>
</organism>
<reference key="1">
    <citation type="submission" date="1997-03" db="EMBL/GenBank/DDBJ databases">
        <title>A 148 kbp sequence of the region between 35 and 47 degree of the Bacillus subtilis genome.</title>
        <authorList>
            <person name="Kasahara Y."/>
            <person name="Nakai S."/>
            <person name="Lee S."/>
            <person name="Sadaie Y."/>
            <person name="Ogasawara N."/>
        </authorList>
    </citation>
    <scope>NUCLEOTIDE SEQUENCE [GENOMIC DNA]</scope>
    <source>
        <strain>168</strain>
    </source>
</reference>
<reference key="2">
    <citation type="journal article" date="1997" name="Nature">
        <title>The complete genome sequence of the Gram-positive bacterium Bacillus subtilis.</title>
        <authorList>
            <person name="Kunst F."/>
            <person name="Ogasawara N."/>
            <person name="Moszer I."/>
            <person name="Albertini A.M."/>
            <person name="Alloni G."/>
            <person name="Azevedo V."/>
            <person name="Bertero M.G."/>
            <person name="Bessieres P."/>
            <person name="Bolotin A."/>
            <person name="Borchert S."/>
            <person name="Borriss R."/>
            <person name="Boursier L."/>
            <person name="Brans A."/>
            <person name="Braun M."/>
            <person name="Brignell S.C."/>
            <person name="Bron S."/>
            <person name="Brouillet S."/>
            <person name="Bruschi C.V."/>
            <person name="Caldwell B."/>
            <person name="Capuano V."/>
            <person name="Carter N.M."/>
            <person name="Choi S.-K."/>
            <person name="Codani J.-J."/>
            <person name="Connerton I.F."/>
            <person name="Cummings N.J."/>
            <person name="Daniel R.A."/>
            <person name="Denizot F."/>
            <person name="Devine K.M."/>
            <person name="Duesterhoeft A."/>
            <person name="Ehrlich S.D."/>
            <person name="Emmerson P.T."/>
            <person name="Entian K.-D."/>
            <person name="Errington J."/>
            <person name="Fabret C."/>
            <person name="Ferrari E."/>
            <person name="Foulger D."/>
            <person name="Fritz C."/>
            <person name="Fujita M."/>
            <person name="Fujita Y."/>
            <person name="Fuma S."/>
            <person name="Galizzi A."/>
            <person name="Galleron N."/>
            <person name="Ghim S.-Y."/>
            <person name="Glaser P."/>
            <person name="Goffeau A."/>
            <person name="Golightly E.J."/>
            <person name="Grandi G."/>
            <person name="Guiseppi G."/>
            <person name="Guy B.J."/>
            <person name="Haga K."/>
            <person name="Haiech J."/>
            <person name="Harwood C.R."/>
            <person name="Henaut A."/>
            <person name="Hilbert H."/>
            <person name="Holsappel S."/>
            <person name="Hosono S."/>
            <person name="Hullo M.-F."/>
            <person name="Itaya M."/>
            <person name="Jones L.-M."/>
            <person name="Joris B."/>
            <person name="Karamata D."/>
            <person name="Kasahara Y."/>
            <person name="Klaerr-Blanchard M."/>
            <person name="Klein C."/>
            <person name="Kobayashi Y."/>
            <person name="Koetter P."/>
            <person name="Koningstein G."/>
            <person name="Krogh S."/>
            <person name="Kumano M."/>
            <person name="Kurita K."/>
            <person name="Lapidus A."/>
            <person name="Lardinois S."/>
            <person name="Lauber J."/>
            <person name="Lazarevic V."/>
            <person name="Lee S.-M."/>
            <person name="Levine A."/>
            <person name="Liu H."/>
            <person name="Masuda S."/>
            <person name="Mauel C."/>
            <person name="Medigue C."/>
            <person name="Medina N."/>
            <person name="Mellado R.P."/>
            <person name="Mizuno M."/>
            <person name="Moestl D."/>
            <person name="Nakai S."/>
            <person name="Noback M."/>
            <person name="Noone D."/>
            <person name="O'Reilly M."/>
            <person name="Ogawa K."/>
            <person name="Ogiwara A."/>
            <person name="Oudega B."/>
            <person name="Park S.-H."/>
            <person name="Parro V."/>
            <person name="Pohl T.M."/>
            <person name="Portetelle D."/>
            <person name="Porwollik S."/>
            <person name="Prescott A.M."/>
            <person name="Presecan E."/>
            <person name="Pujic P."/>
            <person name="Purnelle B."/>
            <person name="Rapoport G."/>
            <person name="Rey M."/>
            <person name="Reynolds S."/>
            <person name="Rieger M."/>
            <person name="Rivolta C."/>
            <person name="Rocha E."/>
            <person name="Roche B."/>
            <person name="Rose M."/>
            <person name="Sadaie Y."/>
            <person name="Sato T."/>
            <person name="Scanlan E."/>
            <person name="Schleich S."/>
            <person name="Schroeter R."/>
            <person name="Scoffone F."/>
            <person name="Sekiguchi J."/>
            <person name="Sekowska A."/>
            <person name="Seror S.J."/>
            <person name="Serror P."/>
            <person name="Shin B.-S."/>
            <person name="Soldo B."/>
            <person name="Sorokin A."/>
            <person name="Tacconi E."/>
            <person name="Takagi T."/>
            <person name="Takahashi H."/>
            <person name="Takemaru K."/>
            <person name="Takeuchi M."/>
            <person name="Tamakoshi A."/>
            <person name="Tanaka T."/>
            <person name="Terpstra P."/>
            <person name="Tognoni A."/>
            <person name="Tosato V."/>
            <person name="Uchiyama S."/>
            <person name="Vandenbol M."/>
            <person name="Vannier F."/>
            <person name="Vassarotti A."/>
            <person name="Viari A."/>
            <person name="Wambutt R."/>
            <person name="Wedler E."/>
            <person name="Wedler H."/>
            <person name="Weitzenegger T."/>
            <person name="Winters P."/>
            <person name="Wipat A."/>
            <person name="Yamamoto H."/>
            <person name="Yamane K."/>
            <person name="Yasumoto K."/>
            <person name="Yata K."/>
            <person name="Yoshida K."/>
            <person name="Yoshikawa H.-F."/>
            <person name="Zumstein E."/>
            <person name="Yoshikawa H."/>
            <person name="Danchin A."/>
        </authorList>
    </citation>
    <scope>NUCLEOTIDE SEQUENCE [LARGE SCALE GENOMIC DNA]</scope>
    <source>
        <strain>168</strain>
    </source>
</reference>
<sequence>MISIMMKVSLAVFMLAGGIIKVSRVPFQVEHWRHYQYPLWFLTVTGILEIAGALAMTAGIWNRYAAIGAGVLFVVLMAGAIHAHMFRARQSVIMAIQAMICLIVSIMIIMGSYT</sequence>
<gene>
    <name type="primary">ydgD</name>
    <name type="ordered locus">BSU05590</name>
</gene>
<comment type="subcellular location">
    <subcellularLocation>
        <location evidence="2">Cell membrane</location>
        <topology evidence="2">Multi-pass membrane protein</topology>
    </subcellularLocation>
</comment>
<protein>
    <recommendedName>
        <fullName>Uncharacterized protein YdgD</fullName>
    </recommendedName>
</protein>
<accession>P96702</accession>
<keyword id="KW-1003">Cell membrane</keyword>
<keyword id="KW-0472">Membrane</keyword>
<keyword id="KW-1185">Reference proteome</keyword>
<keyword id="KW-0812">Transmembrane</keyword>
<keyword id="KW-1133">Transmembrane helix</keyword>
<proteinExistence type="predicted"/>
<dbReference type="EMBL" id="AB001488">
    <property type="protein sequence ID" value="BAA19392.1"/>
    <property type="molecule type" value="Genomic_DNA"/>
</dbReference>
<dbReference type="EMBL" id="AL009126">
    <property type="protein sequence ID" value="CAB12366.1"/>
    <property type="molecule type" value="Genomic_DNA"/>
</dbReference>
<dbReference type="PIR" id="F69782">
    <property type="entry name" value="F69782"/>
</dbReference>
<dbReference type="RefSeq" id="NP_388440.1">
    <property type="nucleotide sequence ID" value="NC_000964.3"/>
</dbReference>
<dbReference type="RefSeq" id="WP_009966666.1">
    <property type="nucleotide sequence ID" value="NZ_OZ025638.1"/>
</dbReference>
<dbReference type="SMR" id="P96702"/>
<dbReference type="FunCoup" id="P96702">
    <property type="interactions" value="16"/>
</dbReference>
<dbReference type="STRING" id="224308.BSU05590"/>
<dbReference type="PaxDb" id="224308-BSU05590"/>
<dbReference type="EnsemblBacteria" id="CAB12366">
    <property type="protein sequence ID" value="CAB12366"/>
    <property type="gene ID" value="BSU_05590"/>
</dbReference>
<dbReference type="GeneID" id="939895"/>
<dbReference type="KEGG" id="bsu:BSU05590"/>
<dbReference type="PATRIC" id="fig|224308.179.peg.601"/>
<dbReference type="eggNOG" id="ENOG5033Z4Z">
    <property type="taxonomic scope" value="Bacteria"/>
</dbReference>
<dbReference type="InParanoid" id="P96702"/>
<dbReference type="OrthoDB" id="2929366at2"/>
<dbReference type="BioCyc" id="BSUB:BSU05590-MONOMER"/>
<dbReference type="Proteomes" id="UP000001570">
    <property type="component" value="Chromosome"/>
</dbReference>
<dbReference type="GO" id="GO:0005886">
    <property type="term" value="C:plasma membrane"/>
    <property type="evidence" value="ECO:0007669"/>
    <property type="project" value="UniProtKB-SubCell"/>
</dbReference>
<dbReference type="InterPro" id="IPR032808">
    <property type="entry name" value="DoxX"/>
</dbReference>
<dbReference type="Pfam" id="PF13564">
    <property type="entry name" value="DoxX_2"/>
    <property type="match status" value="1"/>
</dbReference>